<name>VPR_SIVCZ</name>
<organismHost>
    <name type="scientific">Pan</name>
    <name type="common">chimpanzees</name>
    <dbReference type="NCBI Taxonomy" id="9596"/>
</organismHost>
<organism>
    <name type="scientific">Simian immunodeficiency virus (isolate CPZ GAB1)</name>
    <name type="common">SIV-cpz</name>
    <name type="synonym">Chimpanzee immunodeficiency virus</name>
    <dbReference type="NCBI Taxonomy" id="402771"/>
    <lineage>
        <taxon>Viruses</taxon>
        <taxon>Riboviria</taxon>
        <taxon>Pararnavirae</taxon>
        <taxon>Artverviricota</taxon>
        <taxon>Revtraviricetes</taxon>
        <taxon>Ortervirales</taxon>
        <taxon>Retroviridae</taxon>
        <taxon>Orthoretrovirinae</taxon>
        <taxon>Lentivirus</taxon>
        <taxon>Simian immunodeficiency virus</taxon>
    </lineage>
</organism>
<comment type="function">
    <text evidence="1">During virus replication, may deplete host UNG protein, and incude G2-M cell cycle arrest. Acts by targeting specific host proteins for degradation by the 26S proteasome, through association with the cellular CUL4A-DDB1 E3 ligase complex by direct interaction with host VPRPB/DCAF-1. Cell cycle arrest reportedly occurs within hours of infection and is not blocked by antiviral agents, suggesting that it is initiated by the VPR carried into the virion. Additionally, VPR induces apoptosis in a cell cycle dependent manner suggesting that these two effects are mechanistically linked. Detected in the serum and cerebrospinal fluid of AIDS patient, VPR may also induce cell death to bystander cells.</text>
</comment>
<comment type="function">
    <text evidence="1">During virus entry, plays a role in the transport of the viral pre-integration (PIC) complex to the host nucleus. This function is crucial for viral infection of non-dividing macrophages. May act directly at the nuclear pore complex, by binding nucleoporins phenylalanine-glycine (FG)-repeat regions.</text>
</comment>
<comment type="subunit">
    <text evidence="1">Homooligomer, may form homodimer. Interacts with p6-gag region of the Pr55 Gag precursor protein through a (Leu-X-X)4 motif near the C-terminus of the P6gag protein. Interacts with host UNG. May interact with host RAD23A/HHR23A. Interacts with host VPRBP/DCAF1, leading to hijack the CUL4A-RBX1-DDB1-DCAF1/VPRBP complex, mediating ubiquitination of host proteins such as TERT and ZGPAT and arrest of the cell cycle in G2 phase.</text>
</comment>
<comment type="subcellular location">
    <subcellularLocation>
        <location evidence="1">Virion</location>
    </subcellularLocation>
    <subcellularLocation>
        <location evidence="1">Host nucleus</location>
    </subcellularLocation>
    <subcellularLocation>
        <location evidence="1">Host extracellular space</location>
    </subcellularLocation>
    <text evidence="1">Incorporation into virion is dependent on p6 GAG sequences. Lacks a canonical nuclear localization signal, thus import into nucleus may function independently of the human importin pathway. Detected in high quantity in the serum and cerebrospinal fluid of AIDS patient.</text>
</comment>
<comment type="PTM">
    <text evidence="1">Phosphorylated on several residues by host. These phosphorylations regulate VPR activity for the nuclear import of the HIV-1 pre-integration complex.</text>
</comment>
<comment type="miscellaneous">
    <text evidence="1">HIV-1 lineages are divided in three main groups, M (for Major), O (for Outlier), and N (for New, or Non-M, Non-O). The vast majority of strains found worldwide belong to the group M. Group O seems to be endemic to and largely confined to Cameroon and neighboring countries in West Central Africa, where these viruses represent a small minority of HIV-1 strains. The group N is represented by a limited number of isolates from Cameroonian persons. The group M is further subdivided in 9 clades or subtypes (A to D, F to H, J and K).</text>
</comment>
<comment type="similarity">
    <text evidence="1">Belongs to the HIV-1 VPR protein family.</text>
</comment>
<proteinExistence type="inferred from homology"/>
<protein>
    <recommendedName>
        <fullName evidence="1">Protein Vpr</fullName>
    </recommendedName>
    <alternativeName>
        <fullName evidence="1">R ORF protein</fullName>
    </alternativeName>
    <alternativeName>
        <fullName evidence="1">Viral protein R</fullName>
    </alternativeName>
</protein>
<keyword id="KW-0010">Activator</keyword>
<keyword id="KW-0014">AIDS</keyword>
<keyword id="KW-0053">Apoptosis</keyword>
<keyword id="KW-0131">Cell cycle</keyword>
<keyword id="KW-1079">Host G2/M cell cycle arrest by virus</keyword>
<keyword id="KW-1048">Host nucleus</keyword>
<keyword id="KW-0945">Host-virus interaction</keyword>
<keyword id="KW-0407">Ion channel</keyword>
<keyword id="KW-0406">Ion transport</keyword>
<keyword id="KW-1121">Modulation of host cell cycle by virus</keyword>
<keyword id="KW-0597">Phosphoprotein</keyword>
<keyword id="KW-1185">Reference proteome</keyword>
<keyword id="KW-0804">Transcription</keyword>
<keyword id="KW-0805">Transcription regulation</keyword>
<keyword id="KW-0813">Transport</keyword>
<keyword id="KW-1163">Viral penetration into host nucleus</keyword>
<keyword id="KW-0946">Virion</keyword>
<keyword id="KW-1160">Virus entry into host cell</keyword>
<accession>P17287</accession>
<gene>
    <name evidence="1" type="primary">vpr</name>
</gene>
<reference key="1">
    <citation type="journal article" date="1990" name="Nature">
        <title>Genetic organization of a chimpanzee lentivirus related to HIV-1.</title>
        <authorList>
            <person name="Huet T."/>
            <person name="Cheynier R."/>
            <person name="Meyerhans A."/>
            <person name="Roelants G."/>
            <person name="Wain-Hobson S."/>
        </authorList>
    </citation>
    <scope>NUCLEOTIDE SEQUENCE [GENOMIC RNA]</scope>
</reference>
<dbReference type="EMBL" id="X52154">
    <property type="protein sequence ID" value="CAA36403.1"/>
    <property type="molecule type" value="Genomic_RNA"/>
</dbReference>
<dbReference type="PIR" id="S09986">
    <property type="entry name" value="ASLJSC"/>
</dbReference>
<dbReference type="SMR" id="P17287"/>
<dbReference type="Proteomes" id="UP000009153">
    <property type="component" value="Segment"/>
</dbReference>
<dbReference type="GO" id="GO:0043657">
    <property type="term" value="C:host cell"/>
    <property type="evidence" value="ECO:0007669"/>
    <property type="project" value="GOC"/>
</dbReference>
<dbReference type="GO" id="GO:0042025">
    <property type="term" value="C:host cell nucleus"/>
    <property type="evidence" value="ECO:0007669"/>
    <property type="project" value="UniProtKB-SubCell"/>
</dbReference>
<dbReference type="GO" id="GO:0043655">
    <property type="term" value="C:host extracellular space"/>
    <property type="evidence" value="ECO:0007669"/>
    <property type="project" value="UniProtKB-SubCell"/>
</dbReference>
<dbReference type="GO" id="GO:0044423">
    <property type="term" value="C:virion component"/>
    <property type="evidence" value="ECO:0007669"/>
    <property type="project" value="UniProtKB-UniRule"/>
</dbReference>
<dbReference type="GO" id="GO:0006351">
    <property type="term" value="P:DNA-templated transcription"/>
    <property type="evidence" value="ECO:0007669"/>
    <property type="project" value="UniProtKB-UniRule"/>
</dbReference>
<dbReference type="GO" id="GO:0034220">
    <property type="term" value="P:monoatomic ion transmembrane transport"/>
    <property type="evidence" value="ECO:0007669"/>
    <property type="project" value="UniProtKB-KW"/>
</dbReference>
<dbReference type="GO" id="GO:0051260">
    <property type="term" value="P:protein homooligomerization"/>
    <property type="evidence" value="ECO:0007669"/>
    <property type="project" value="UniProtKB-UniRule"/>
</dbReference>
<dbReference type="GO" id="GO:0006355">
    <property type="term" value="P:regulation of DNA-templated transcription"/>
    <property type="evidence" value="ECO:0007669"/>
    <property type="project" value="UniProtKB-UniRule"/>
</dbReference>
<dbReference type="GO" id="GO:0046718">
    <property type="term" value="P:symbiont entry into host cell"/>
    <property type="evidence" value="ECO:0007669"/>
    <property type="project" value="UniProtKB-KW"/>
</dbReference>
<dbReference type="GO" id="GO:0052151">
    <property type="term" value="P:symbiont-mediated activation of host apoptosis"/>
    <property type="evidence" value="ECO:0007669"/>
    <property type="project" value="UniProtKB-UniRule"/>
</dbReference>
<dbReference type="GO" id="GO:0039592">
    <property type="term" value="P:symbiont-mediated arrest of host cell cycle during G2/M transition"/>
    <property type="evidence" value="ECO:0007669"/>
    <property type="project" value="UniProtKB-UniRule"/>
</dbReference>
<dbReference type="GO" id="GO:0075732">
    <property type="term" value="P:viral penetration into host nucleus"/>
    <property type="evidence" value="ECO:0007669"/>
    <property type="project" value="UniProtKB-UniRule"/>
</dbReference>
<dbReference type="Gene3D" id="6.10.210.10">
    <property type="match status" value="1"/>
</dbReference>
<dbReference type="Gene3D" id="1.20.5.90">
    <property type="entry name" value="VpR/VpX protein, C-terminal domain"/>
    <property type="match status" value="1"/>
</dbReference>
<dbReference type="HAMAP" id="MF_04080">
    <property type="entry name" value="HIV_VPR"/>
    <property type="match status" value="1"/>
</dbReference>
<dbReference type="InterPro" id="IPR000012">
    <property type="entry name" value="RetroV_VpR/X"/>
</dbReference>
<dbReference type="Pfam" id="PF00522">
    <property type="entry name" value="VPR"/>
    <property type="match status" value="1"/>
</dbReference>
<dbReference type="PRINTS" id="PR00444">
    <property type="entry name" value="HIVVPRVPX"/>
</dbReference>
<feature type="chain" id="PRO_0000085471" description="Protein Vpr">
    <location>
        <begin position="1"/>
        <end position="96"/>
    </location>
</feature>
<feature type="region of interest" description="Homooligomerization" evidence="1">
    <location>
        <begin position="1"/>
        <end position="42"/>
    </location>
</feature>
<feature type="modified residue" description="Phosphoserine; by host" evidence="1">
    <location>
        <position position="79"/>
    </location>
</feature>
<feature type="modified residue" description="Phosphoserine; by host" evidence="1">
    <location>
        <position position="96"/>
    </location>
</feature>
<evidence type="ECO:0000255" key="1">
    <source>
        <dbReference type="HAMAP-Rule" id="MF_04080"/>
    </source>
</evidence>
<sequence length="96" mass="11376">MEQAPEDQGPPREPYQEWALETLEELKNEAVRHFPRPWLHQLGQFIYDTYGDTWVGVEAIIRILQHLLFIHFRLGCQHSRIGILPQRRRSNGSNRS</sequence>